<proteinExistence type="inferred from homology"/>
<dbReference type="EMBL" id="CR936503">
    <property type="protein sequence ID" value="CAI54828.1"/>
    <property type="molecule type" value="Genomic_DNA"/>
</dbReference>
<dbReference type="RefSeq" id="WP_011374236.1">
    <property type="nucleotide sequence ID" value="NC_007576.1"/>
</dbReference>
<dbReference type="SMR" id="Q38Y99"/>
<dbReference type="STRING" id="314315.LCA_0528"/>
<dbReference type="KEGG" id="lsa:LCA_0528"/>
<dbReference type="eggNOG" id="COG1481">
    <property type="taxonomic scope" value="Bacteria"/>
</dbReference>
<dbReference type="HOGENOM" id="CLU_053282_0_0_9"/>
<dbReference type="OrthoDB" id="401278at2"/>
<dbReference type="Proteomes" id="UP000002707">
    <property type="component" value="Chromosome"/>
</dbReference>
<dbReference type="GO" id="GO:0003677">
    <property type="term" value="F:DNA binding"/>
    <property type="evidence" value="ECO:0007669"/>
    <property type="project" value="UniProtKB-UniRule"/>
</dbReference>
<dbReference type="GO" id="GO:0004519">
    <property type="term" value="F:endonuclease activity"/>
    <property type="evidence" value="ECO:0007669"/>
    <property type="project" value="InterPro"/>
</dbReference>
<dbReference type="GO" id="GO:0051301">
    <property type="term" value="P:cell division"/>
    <property type="evidence" value="ECO:0007669"/>
    <property type="project" value="UniProtKB-UniRule"/>
</dbReference>
<dbReference type="GO" id="GO:0043937">
    <property type="term" value="P:regulation of sporulation"/>
    <property type="evidence" value="ECO:0007669"/>
    <property type="project" value="InterPro"/>
</dbReference>
<dbReference type="FunFam" id="3.10.28.10:FF:000002">
    <property type="entry name" value="Probable cell division protein WhiA"/>
    <property type="match status" value="1"/>
</dbReference>
<dbReference type="Gene3D" id="3.10.28.10">
    <property type="entry name" value="Homing endonucleases"/>
    <property type="match status" value="1"/>
</dbReference>
<dbReference type="HAMAP" id="MF_01420">
    <property type="entry name" value="HTH_type_WhiA"/>
    <property type="match status" value="1"/>
</dbReference>
<dbReference type="InterPro" id="IPR027434">
    <property type="entry name" value="Homing_endonucl"/>
</dbReference>
<dbReference type="InterPro" id="IPR004042">
    <property type="entry name" value="Intein_endonuc_central"/>
</dbReference>
<dbReference type="InterPro" id="IPR018478">
    <property type="entry name" value="Sporu_reg_WhiA_N_dom"/>
</dbReference>
<dbReference type="InterPro" id="IPR003802">
    <property type="entry name" value="Sporulation_regulator_WhiA"/>
</dbReference>
<dbReference type="InterPro" id="IPR023054">
    <property type="entry name" value="Sporulation_regulator_WhiA_C"/>
</dbReference>
<dbReference type="InterPro" id="IPR039518">
    <property type="entry name" value="WhiA_LAGLIDADG_dom"/>
</dbReference>
<dbReference type="NCBIfam" id="TIGR00647">
    <property type="entry name" value="DNA_bind_WhiA"/>
    <property type="match status" value="1"/>
</dbReference>
<dbReference type="PANTHER" id="PTHR37307">
    <property type="entry name" value="CELL DIVISION PROTEIN WHIA-RELATED"/>
    <property type="match status" value="1"/>
</dbReference>
<dbReference type="PANTHER" id="PTHR37307:SF1">
    <property type="entry name" value="CELL DIVISION PROTEIN WHIA-RELATED"/>
    <property type="match status" value="1"/>
</dbReference>
<dbReference type="Pfam" id="PF02650">
    <property type="entry name" value="HTH_WhiA"/>
    <property type="match status" value="1"/>
</dbReference>
<dbReference type="Pfam" id="PF14527">
    <property type="entry name" value="LAGLIDADG_WhiA"/>
    <property type="match status" value="1"/>
</dbReference>
<dbReference type="Pfam" id="PF10298">
    <property type="entry name" value="WhiA_N"/>
    <property type="match status" value="1"/>
</dbReference>
<dbReference type="SUPFAM" id="SSF55608">
    <property type="entry name" value="Homing endonucleases"/>
    <property type="match status" value="1"/>
</dbReference>
<dbReference type="PROSITE" id="PS50819">
    <property type="entry name" value="INTEIN_ENDONUCLEASE"/>
    <property type="match status" value="1"/>
</dbReference>
<feature type="chain" id="PRO_0000376506" description="Probable cell division protein WhiA">
    <location>
        <begin position="1"/>
        <end position="314"/>
    </location>
</feature>
<feature type="DNA-binding region" description="H-T-H motif" evidence="1">
    <location>
        <begin position="277"/>
        <end position="311"/>
    </location>
</feature>
<reference key="1">
    <citation type="journal article" date="2005" name="Nat. Biotechnol.">
        <title>The complete genome sequence of the meat-borne lactic acid bacterium Lactobacillus sakei 23K.</title>
        <authorList>
            <person name="Chaillou S."/>
            <person name="Champomier-Verges M.-C."/>
            <person name="Cornet M."/>
            <person name="Crutz-Le Coq A.-M."/>
            <person name="Dudez A.-M."/>
            <person name="Martin V."/>
            <person name="Beaufils S."/>
            <person name="Darbon-Rongere E."/>
            <person name="Bossy R."/>
            <person name="Loux V."/>
            <person name="Zagorec M."/>
        </authorList>
    </citation>
    <scope>NUCLEOTIDE SEQUENCE [LARGE SCALE GENOMIC DNA]</scope>
    <source>
        <strain>23K</strain>
    </source>
</reference>
<evidence type="ECO:0000255" key="1">
    <source>
        <dbReference type="HAMAP-Rule" id="MF_01420"/>
    </source>
</evidence>
<sequence length="314" mass="36066">MASYASEVKKELTQLEVHPEHARAELAALIRMNGSLSLMNHQFVLNVQTENPAIARRIYSLLKQNYQVESELLVRRKMKLKKNNQYIVRLKYDTNTVLNDLNIVAEDGFTIHTRVSEDIIDEDQRVRSYLRGAFLAGGSVNNPETSRYHLEIYSLYEEHNQDIVRMMNRFGLNAKTTVRRSGYITYLKEAEKIADFLQVIGATNAMLKFEDIRIVRDMRNSVNRLVNCETANLNKTIDAAAKQIENIEYLRDSVGLDNLPAKLREIALLRLEFPDITLKELGEKMPSGAISKSGINHRLRKLNQLAEGYQQKVI</sequence>
<keyword id="KW-0131">Cell cycle</keyword>
<keyword id="KW-0132">Cell division</keyword>
<keyword id="KW-0238">DNA-binding</keyword>
<keyword id="KW-1185">Reference proteome</keyword>
<organism>
    <name type="scientific">Latilactobacillus sakei subsp. sakei (strain 23K)</name>
    <name type="common">Lactobacillus sakei subsp. sakei</name>
    <dbReference type="NCBI Taxonomy" id="314315"/>
    <lineage>
        <taxon>Bacteria</taxon>
        <taxon>Bacillati</taxon>
        <taxon>Bacillota</taxon>
        <taxon>Bacilli</taxon>
        <taxon>Lactobacillales</taxon>
        <taxon>Lactobacillaceae</taxon>
        <taxon>Latilactobacillus</taxon>
    </lineage>
</organism>
<gene>
    <name evidence="1" type="primary">whiA</name>
    <name type="ordered locus">LCA_0528</name>
</gene>
<comment type="function">
    <text evidence="1">Involved in cell division and chromosome segregation.</text>
</comment>
<comment type="similarity">
    <text evidence="1">Belongs to the WhiA family.</text>
</comment>
<protein>
    <recommendedName>
        <fullName evidence="1">Probable cell division protein WhiA</fullName>
    </recommendedName>
</protein>
<accession>Q38Y99</accession>
<name>WHIA_LATSS</name>